<organism>
    <name type="scientific">Parafrankia sp. (strain EAN1pec)</name>
    <dbReference type="NCBI Taxonomy" id="298653"/>
    <lineage>
        <taxon>Bacteria</taxon>
        <taxon>Bacillati</taxon>
        <taxon>Actinomycetota</taxon>
        <taxon>Actinomycetes</taxon>
        <taxon>Frankiales</taxon>
        <taxon>Frankiaceae</taxon>
        <taxon>Parafrankia</taxon>
    </lineage>
</organism>
<evidence type="ECO:0000255" key="1">
    <source>
        <dbReference type="HAMAP-Rule" id="MF_00539"/>
    </source>
</evidence>
<evidence type="ECO:0000256" key="2">
    <source>
        <dbReference type="SAM" id="MobiDB-lite"/>
    </source>
</evidence>
<evidence type="ECO:0000305" key="3"/>
<name>RL27_PARS2</name>
<protein>
    <recommendedName>
        <fullName evidence="1">Large ribosomal subunit protein bL27</fullName>
    </recommendedName>
    <alternativeName>
        <fullName evidence="3">50S ribosomal protein L27</fullName>
    </alternativeName>
</protein>
<feature type="chain" id="PRO_1000128752" description="Large ribosomal subunit protein bL27">
    <location>
        <begin position="1"/>
        <end position="95"/>
    </location>
</feature>
<feature type="region of interest" description="Disordered" evidence="2">
    <location>
        <begin position="1"/>
        <end position="21"/>
    </location>
</feature>
<feature type="compositionally biased region" description="Polar residues" evidence="2">
    <location>
        <begin position="7"/>
        <end position="19"/>
    </location>
</feature>
<keyword id="KW-0687">Ribonucleoprotein</keyword>
<keyword id="KW-0689">Ribosomal protein</keyword>
<dbReference type="EMBL" id="CP000820">
    <property type="protein sequence ID" value="ABW14617.1"/>
    <property type="molecule type" value="Genomic_DNA"/>
</dbReference>
<dbReference type="RefSeq" id="WP_018500214.1">
    <property type="nucleotide sequence ID" value="NC_009921.1"/>
</dbReference>
<dbReference type="SMR" id="A8L1V7"/>
<dbReference type="STRING" id="298653.Franean1_5259"/>
<dbReference type="KEGG" id="fre:Franean1_5259"/>
<dbReference type="eggNOG" id="COG0211">
    <property type="taxonomic scope" value="Bacteria"/>
</dbReference>
<dbReference type="HOGENOM" id="CLU_095424_4_0_11"/>
<dbReference type="GO" id="GO:0022625">
    <property type="term" value="C:cytosolic large ribosomal subunit"/>
    <property type="evidence" value="ECO:0007669"/>
    <property type="project" value="TreeGrafter"/>
</dbReference>
<dbReference type="GO" id="GO:0003735">
    <property type="term" value="F:structural constituent of ribosome"/>
    <property type="evidence" value="ECO:0007669"/>
    <property type="project" value="InterPro"/>
</dbReference>
<dbReference type="GO" id="GO:0006412">
    <property type="term" value="P:translation"/>
    <property type="evidence" value="ECO:0007669"/>
    <property type="project" value="UniProtKB-UniRule"/>
</dbReference>
<dbReference type="FunFam" id="2.40.50.100:FF:000020">
    <property type="entry name" value="50S ribosomal protein L27"/>
    <property type="match status" value="1"/>
</dbReference>
<dbReference type="Gene3D" id="2.40.50.100">
    <property type="match status" value="1"/>
</dbReference>
<dbReference type="HAMAP" id="MF_00539">
    <property type="entry name" value="Ribosomal_bL27"/>
    <property type="match status" value="1"/>
</dbReference>
<dbReference type="InterPro" id="IPR001684">
    <property type="entry name" value="Ribosomal_bL27"/>
</dbReference>
<dbReference type="InterPro" id="IPR018261">
    <property type="entry name" value="Ribosomal_bL27_CS"/>
</dbReference>
<dbReference type="NCBIfam" id="TIGR00062">
    <property type="entry name" value="L27"/>
    <property type="match status" value="1"/>
</dbReference>
<dbReference type="PANTHER" id="PTHR15893:SF0">
    <property type="entry name" value="LARGE RIBOSOMAL SUBUNIT PROTEIN BL27M"/>
    <property type="match status" value="1"/>
</dbReference>
<dbReference type="PANTHER" id="PTHR15893">
    <property type="entry name" value="RIBOSOMAL PROTEIN L27"/>
    <property type="match status" value="1"/>
</dbReference>
<dbReference type="Pfam" id="PF01016">
    <property type="entry name" value="Ribosomal_L27"/>
    <property type="match status" value="1"/>
</dbReference>
<dbReference type="PRINTS" id="PR00063">
    <property type="entry name" value="RIBOSOMALL27"/>
</dbReference>
<dbReference type="SUPFAM" id="SSF110324">
    <property type="entry name" value="Ribosomal L27 protein-like"/>
    <property type="match status" value="1"/>
</dbReference>
<dbReference type="PROSITE" id="PS00831">
    <property type="entry name" value="RIBOSOMAL_L27"/>
    <property type="match status" value="1"/>
</dbReference>
<sequence length="95" mass="10228">MAHKKGASSSRNGRDSNAQRLGVKRFGGQLVKAGEIIVRQRGTHFHPGDLVGRGKDDTLFALAPGHVEFGRKRGRRVVNIVSADTERAEKAAVPA</sequence>
<proteinExistence type="inferred from homology"/>
<comment type="similarity">
    <text evidence="1">Belongs to the bacterial ribosomal protein bL27 family.</text>
</comment>
<gene>
    <name evidence="1" type="primary">rpmA</name>
    <name type="ordered locus">Franean1_5259</name>
</gene>
<accession>A8L1V7</accession>
<reference key="1">
    <citation type="journal article" date="2007" name="Genome Res.">
        <title>Genome characteristics of facultatively symbiotic Frankia sp. strains reflect host range and host plant biogeography.</title>
        <authorList>
            <person name="Normand P."/>
            <person name="Lapierre P."/>
            <person name="Tisa L.S."/>
            <person name="Gogarten J.P."/>
            <person name="Alloisio N."/>
            <person name="Bagnarol E."/>
            <person name="Bassi C.A."/>
            <person name="Berry A.M."/>
            <person name="Bickhart D.M."/>
            <person name="Choisne N."/>
            <person name="Couloux A."/>
            <person name="Cournoyer B."/>
            <person name="Cruveiller S."/>
            <person name="Daubin V."/>
            <person name="Demange N."/>
            <person name="Francino M.P."/>
            <person name="Goltsman E."/>
            <person name="Huang Y."/>
            <person name="Kopp O.R."/>
            <person name="Labarre L."/>
            <person name="Lapidus A."/>
            <person name="Lavire C."/>
            <person name="Marechal J."/>
            <person name="Martinez M."/>
            <person name="Mastronunzio J.E."/>
            <person name="Mullin B.C."/>
            <person name="Niemann J."/>
            <person name="Pujic P."/>
            <person name="Rawnsley T."/>
            <person name="Rouy Z."/>
            <person name="Schenowitz C."/>
            <person name="Sellstedt A."/>
            <person name="Tavares F."/>
            <person name="Tomkins J.P."/>
            <person name="Vallenet D."/>
            <person name="Valverde C."/>
            <person name="Wall L.G."/>
            <person name="Wang Y."/>
            <person name="Medigue C."/>
            <person name="Benson D.R."/>
        </authorList>
    </citation>
    <scope>NUCLEOTIDE SEQUENCE [LARGE SCALE GENOMIC DNA]</scope>
    <source>
        <strain>EAN1pec</strain>
    </source>
</reference>